<evidence type="ECO:0000255" key="1">
    <source>
        <dbReference type="HAMAP-Rule" id="MF_00127"/>
    </source>
</evidence>
<keyword id="KW-0030">Aminoacyl-tRNA synthetase</keyword>
<keyword id="KW-0067">ATP-binding</keyword>
<keyword id="KW-0963">Cytoplasm</keyword>
<keyword id="KW-0436">Ligase</keyword>
<keyword id="KW-0547">Nucleotide-binding</keyword>
<keyword id="KW-0648">Protein biosynthesis</keyword>
<keyword id="KW-1185">Reference proteome</keyword>
<feature type="chain" id="PRO_0000136248" description="Histidine--tRNA ligase">
    <location>
        <begin position="1"/>
        <end position="495"/>
    </location>
</feature>
<sequence>MAKPKKTPRPKAETPKGFRDYFGAEVTQRTEMLRDIAGVYHRYGFEALESSAVETVEALGKFLPDVDRPNEGVFAWQESEDDGAGDWMALRYDLTAPLARVYAQHRNDLPTPYRRYAMGPVWRNEKPGPGRYRQFYQCDADTVGSASMAADAEICAMLSDTLETVGIPRGDYVVRVNNRKVLNGVLETMGLADEGQRDAVLRTIDKFDKVGEDGVRELLGKGRLDASGAFIDGVGLSDDQAGPVLAFLTSRGADAATTVANLRAAVGASQIGVQGIDELEQIGDLLAAGGYGPDRIVIDPSVVRGLGYYTGPVYEAELTFEIFDEKGRKRQFGSVSGGGRYDDLVKRFTGQEVPATGVSIGVDRLLAALREKGRIRTAERGPVVVTVMDRDRMADYQAMVAELRNAGIRAEVYLGNPKNFGNQLKYADKRNSPVAVIEGGDERANGVVQIKDLILGAQIAANATLEEWKERPSQYEVARADLVAKVREILAEQAG</sequence>
<comment type="catalytic activity">
    <reaction evidence="1">
        <text>tRNA(His) + L-histidine + ATP = L-histidyl-tRNA(His) + AMP + diphosphate + H(+)</text>
        <dbReference type="Rhea" id="RHEA:17313"/>
        <dbReference type="Rhea" id="RHEA-COMP:9665"/>
        <dbReference type="Rhea" id="RHEA-COMP:9689"/>
        <dbReference type="ChEBI" id="CHEBI:15378"/>
        <dbReference type="ChEBI" id="CHEBI:30616"/>
        <dbReference type="ChEBI" id="CHEBI:33019"/>
        <dbReference type="ChEBI" id="CHEBI:57595"/>
        <dbReference type="ChEBI" id="CHEBI:78442"/>
        <dbReference type="ChEBI" id="CHEBI:78527"/>
        <dbReference type="ChEBI" id="CHEBI:456215"/>
        <dbReference type="EC" id="6.1.1.21"/>
    </reaction>
</comment>
<comment type="subunit">
    <text evidence="1">Homodimer.</text>
</comment>
<comment type="subcellular location">
    <subcellularLocation>
        <location evidence="1">Cytoplasm</location>
    </subcellularLocation>
</comment>
<comment type="similarity">
    <text evidence="1">Belongs to the class-II aminoacyl-tRNA synthetase family.</text>
</comment>
<name>SYH_RUEPO</name>
<organism>
    <name type="scientific">Ruegeria pomeroyi (strain ATCC 700808 / DSM 15171 / DSS-3)</name>
    <name type="common">Silicibacter pomeroyi</name>
    <dbReference type="NCBI Taxonomy" id="246200"/>
    <lineage>
        <taxon>Bacteria</taxon>
        <taxon>Pseudomonadati</taxon>
        <taxon>Pseudomonadota</taxon>
        <taxon>Alphaproteobacteria</taxon>
        <taxon>Rhodobacterales</taxon>
        <taxon>Roseobacteraceae</taxon>
        <taxon>Ruegeria</taxon>
    </lineage>
</organism>
<gene>
    <name evidence="1" type="primary">hisS</name>
    <name type="ordered locus">SPO0667</name>
</gene>
<reference key="1">
    <citation type="journal article" date="2004" name="Nature">
        <title>Genome sequence of Silicibacter pomeroyi reveals adaptations to the marine environment.</title>
        <authorList>
            <person name="Moran M.A."/>
            <person name="Buchan A."/>
            <person name="Gonzalez J.M."/>
            <person name="Heidelberg J.F."/>
            <person name="Whitman W.B."/>
            <person name="Kiene R.P."/>
            <person name="Henriksen J.R."/>
            <person name="King G.M."/>
            <person name="Belas R."/>
            <person name="Fuqua C."/>
            <person name="Brinkac L.M."/>
            <person name="Lewis M."/>
            <person name="Johri S."/>
            <person name="Weaver B."/>
            <person name="Pai G."/>
            <person name="Eisen J.A."/>
            <person name="Rahe E."/>
            <person name="Sheldon W.M."/>
            <person name="Ye W."/>
            <person name="Miller T.R."/>
            <person name="Carlton J."/>
            <person name="Rasko D.A."/>
            <person name="Paulsen I.T."/>
            <person name="Ren Q."/>
            <person name="Daugherty S.C."/>
            <person name="DeBoy R.T."/>
            <person name="Dodson R.J."/>
            <person name="Durkin A.S."/>
            <person name="Madupu R."/>
            <person name="Nelson W.C."/>
            <person name="Sullivan S.A."/>
            <person name="Rosovitz M.J."/>
            <person name="Haft D.H."/>
            <person name="Selengut J."/>
            <person name="Ward N."/>
        </authorList>
    </citation>
    <scope>NUCLEOTIDE SEQUENCE [LARGE SCALE GENOMIC DNA]</scope>
    <source>
        <strain>ATCC 700808 / DSM 15171 / DSS-3</strain>
    </source>
</reference>
<reference key="2">
    <citation type="journal article" date="2014" name="Stand. Genomic Sci.">
        <title>An updated genome annotation for the model marine bacterium Ruegeria pomeroyi DSS-3.</title>
        <authorList>
            <person name="Rivers A.R."/>
            <person name="Smith C.B."/>
            <person name="Moran M.A."/>
        </authorList>
    </citation>
    <scope>GENOME REANNOTATION</scope>
    <source>
        <strain>ATCC 700808 / DSM 15171 / DSS-3</strain>
    </source>
</reference>
<accession>Q5LVN3</accession>
<dbReference type="EC" id="6.1.1.21" evidence="1"/>
<dbReference type="EMBL" id="CP000031">
    <property type="protein sequence ID" value="AAV93975.1"/>
    <property type="molecule type" value="Genomic_DNA"/>
</dbReference>
<dbReference type="RefSeq" id="WP_011046418.1">
    <property type="nucleotide sequence ID" value="NC_003911.12"/>
</dbReference>
<dbReference type="SMR" id="Q5LVN3"/>
<dbReference type="STRING" id="246200.SPO0667"/>
<dbReference type="PaxDb" id="246200-SPO0667"/>
<dbReference type="KEGG" id="sil:SPO0667"/>
<dbReference type="eggNOG" id="COG0124">
    <property type="taxonomic scope" value="Bacteria"/>
</dbReference>
<dbReference type="HOGENOM" id="CLU_025113_3_2_5"/>
<dbReference type="OrthoDB" id="9800814at2"/>
<dbReference type="BRENDA" id="6.1.1.21">
    <property type="organism ID" value="8123"/>
</dbReference>
<dbReference type="Proteomes" id="UP000001023">
    <property type="component" value="Chromosome"/>
</dbReference>
<dbReference type="GO" id="GO:0005737">
    <property type="term" value="C:cytoplasm"/>
    <property type="evidence" value="ECO:0007669"/>
    <property type="project" value="UniProtKB-SubCell"/>
</dbReference>
<dbReference type="GO" id="GO:0005524">
    <property type="term" value="F:ATP binding"/>
    <property type="evidence" value="ECO:0007669"/>
    <property type="project" value="UniProtKB-UniRule"/>
</dbReference>
<dbReference type="GO" id="GO:0004821">
    <property type="term" value="F:histidine-tRNA ligase activity"/>
    <property type="evidence" value="ECO:0007669"/>
    <property type="project" value="UniProtKB-UniRule"/>
</dbReference>
<dbReference type="GO" id="GO:0006427">
    <property type="term" value="P:histidyl-tRNA aminoacylation"/>
    <property type="evidence" value="ECO:0007669"/>
    <property type="project" value="UniProtKB-UniRule"/>
</dbReference>
<dbReference type="CDD" id="cd00773">
    <property type="entry name" value="HisRS-like_core"/>
    <property type="match status" value="1"/>
</dbReference>
<dbReference type="CDD" id="cd00859">
    <property type="entry name" value="HisRS_anticodon"/>
    <property type="match status" value="1"/>
</dbReference>
<dbReference type="Gene3D" id="3.40.50.800">
    <property type="entry name" value="Anticodon-binding domain"/>
    <property type="match status" value="1"/>
</dbReference>
<dbReference type="Gene3D" id="3.30.930.10">
    <property type="entry name" value="Bira Bifunctional Protein, Domain 2"/>
    <property type="match status" value="1"/>
</dbReference>
<dbReference type="HAMAP" id="MF_00127">
    <property type="entry name" value="His_tRNA_synth"/>
    <property type="match status" value="1"/>
</dbReference>
<dbReference type="InterPro" id="IPR006195">
    <property type="entry name" value="aa-tRNA-synth_II"/>
</dbReference>
<dbReference type="InterPro" id="IPR045864">
    <property type="entry name" value="aa-tRNA-synth_II/BPL/LPL"/>
</dbReference>
<dbReference type="InterPro" id="IPR004154">
    <property type="entry name" value="Anticodon-bd"/>
</dbReference>
<dbReference type="InterPro" id="IPR036621">
    <property type="entry name" value="Anticodon-bd_dom_sf"/>
</dbReference>
<dbReference type="InterPro" id="IPR015807">
    <property type="entry name" value="His-tRNA-ligase"/>
</dbReference>
<dbReference type="InterPro" id="IPR041715">
    <property type="entry name" value="HisRS-like_core"/>
</dbReference>
<dbReference type="InterPro" id="IPR004516">
    <property type="entry name" value="HisRS/HisZ"/>
</dbReference>
<dbReference type="InterPro" id="IPR033656">
    <property type="entry name" value="HisRS_anticodon"/>
</dbReference>
<dbReference type="NCBIfam" id="TIGR00442">
    <property type="entry name" value="hisS"/>
    <property type="match status" value="1"/>
</dbReference>
<dbReference type="PANTHER" id="PTHR11476:SF7">
    <property type="entry name" value="HISTIDINE--TRNA LIGASE"/>
    <property type="match status" value="1"/>
</dbReference>
<dbReference type="PANTHER" id="PTHR11476">
    <property type="entry name" value="HISTIDYL-TRNA SYNTHETASE"/>
    <property type="match status" value="1"/>
</dbReference>
<dbReference type="Pfam" id="PF03129">
    <property type="entry name" value="HGTP_anticodon"/>
    <property type="match status" value="1"/>
</dbReference>
<dbReference type="Pfam" id="PF13393">
    <property type="entry name" value="tRNA-synt_His"/>
    <property type="match status" value="1"/>
</dbReference>
<dbReference type="PIRSF" id="PIRSF001549">
    <property type="entry name" value="His-tRNA_synth"/>
    <property type="match status" value="1"/>
</dbReference>
<dbReference type="SUPFAM" id="SSF52954">
    <property type="entry name" value="Class II aaRS ABD-related"/>
    <property type="match status" value="1"/>
</dbReference>
<dbReference type="SUPFAM" id="SSF55681">
    <property type="entry name" value="Class II aaRS and biotin synthetases"/>
    <property type="match status" value="1"/>
</dbReference>
<dbReference type="PROSITE" id="PS50862">
    <property type="entry name" value="AA_TRNA_LIGASE_II"/>
    <property type="match status" value="1"/>
</dbReference>
<protein>
    <recommendedName>
        <fullName evidence="1">Histidine--tRNA ligase</fullName>
        <ecNumber evidence="1">6.1.1.21</ecNumber>
    </recommendedName>
    <alternativeName>
        <fullName evidence="1">Histidyl-tRNA synthetase</fullName>
        <shortName evidence="1">HisRS</shortName>
    </alternativeName>
</protein>
<proteinExistence type="inferred from homology"/>